<reference key="1">
    <citation type="journal article" date="2006" name="Nat. Biotechnol.">
        <title>Complete genome sequence of the entomopathogenic and metabolically versatile soil bacterium Pseudomonas entomophila.</title>
        <authorList>
            <person name="Vodovar N."/>
            <person name="Vallenet D."/>
            <person name="Cruveiller S."/>
            <person name="Rouy Z."/>
            <person name="Barbe V."/>
            <person name="Acosta C."/>
            <person name="Cattolico L."/>
            <person name="Jubin C."/>
            <person name="Lajus A."/>
            <person name="Segurens B."/>
            <person name="Vacherie B."/>
            <person name="Wincker P."/>
            <person name="Weissenbach J."/>
            <person name="Lemaitre B."/>
            <person name="Medigue C."/>
            <person name="Boccard F."/>
        </authorList>
    </citation>
    <scope>NUCLEOTIDE SEQUENCE [LARGE SCALE GENOMIC DNA]</scope>
    <source>
        <strain>L48</strain>
    </source>
</reference>
<keyword id="KW-0131">Cell cycle</keyword>
<keyword id="KW-0132">Cell division</keyword>
<keyword id="KW-0159">Chromosome partition</keyword>
<keyword id="KW-0963">Cytoplasm</keyword>
<keyword id="KW-0229">DNA integration</keyword>
<keyword id="KW-0233">DNA recombination</keyword>
<keyword id="KW-0238">DNA-binding</keyword>
<evidence type="ECO:0000255" key="1">
    <source>
        <dbReference type="HAMAP-Rule" id="MF_01808"/>
    </source>
</evidence>
<evidence type="ECO:0000255" key="2">
    <source>
        <dbReference type="PROSITE-ProRule" id="PRU01246"/>
    </source>
</evidence>
<evidence type="ECO:0000255" key="3">
    <source>
        <dbReference type="PROSITE-ProRule" id="PRU01248"/>
    </source>
</evidence>
<accession>Q1I301</accession>
<sequence>MERQLEAYCAHLRNERQVSGHTLLAYRRDLEKVIEFCNNQGIAGWDALQVQQLRQLVARQHHHGQSSRSLARLLSAVRGLYRYLNREGLCQHDPANGLAPPKGERRLPKTLDTDRALQLLDGGVDDDFIARRDQAILELFYSSGLRLSELAGLDLEHLDLTGGLVQVLGKGGKSRVLPVGRKACEALQEWFRLRGIAAPRDGAVFITRQGNRLSTRAIQMRVKTFGERELGQHLHPHMLRHSFASHLLESSQDLRAVQEMLGHADISTTQIYTHLDFQHLAAVYDSAHPRAKRSKGNES</sequence>
<organism>
    <name type="scientific">Pseudomonas entomophila (strain L48)</name>
    <dbReference type="NCBI Taxonomy" id="384676"/>
    <lineage>
        <taxon>Bacteria</taxon>
        <taxon>Pseudomonadati</taxon>
        <taxon>Pseudomonadota</taxon>
        <taxon>Gammaproteobacteria</taxon>
        <taxon>Pseudomonadales</taxon>
        <taxon>Pseudomonadaceae</taxon>
        <taxon>Pseudomonas</taxon>
    </lineage>
</organism>
<gene>
    <name evidence="1" type="primary">xerC</name>
    <name type="ordered locus">PSEEN5368</name>
</gene>
<dbReference type="EMBL" id="CT573326">
    <property type="protein sequence ID" value="CAK17985.1"/>
    <property type="molecule type" value="Genomic_DNA"/>
</dbReference>
<dbReference type="RefSeq" id="WP_011536343.1">
    <property type="nucleotide sequence ID" value="NC_008027.1"/>
</dbReference>
<dbReference type="SMR" id="Q1I301"/>
<dbReference type="STRING" id="384676.PSEEN5368"/>
<dbReference type="GeneID" id="32808279"/>
<dbReference type="KEGG" id="pen:PSEEN5368"/>
<dbReference type="eggNOG" id="COG4973">
    <property type="taxonomic scope" value="Bacteria"/>
</dbReference>
<dbReference type="HOGENOM" id="CLU_027562_9_0_6"/>
<dbReference type="OrthoDB" id="9801717at2"/>
<dbReference type="Proteomes" id="UP000000658">
    <property type="component" value="Chromosome"/>
</dbReference>
<dbReference type="GO" id="GO:0005737">
    <property type="term" value="C:cytoplasm"/>
    <property type="evidence" value="ECO:0007669"/>
    <property type="project" value="UniProtKB-SubCell"/>
</dbReference>
<dbReference type="GO" id="GO:0003677">
    <property type="term" value="F:DNA binding"/>
    <property type="evidence" value="ECO:0007669"/>
    <property type="project" value="UniProtKB-KW"/>
</dbReference>
<dbReference type="GO" id="GO:0009037">
    <property type="term" value="F:tyrosine-based site-specific recombinase activity"/>
    <property type="evidence" value="ECO:0007669"/>
    <property type="project" value="UniProtKB-UniRule"/>
</dbReference>
<dbReference type="GO" id="GO:0051301">
    <property type="term" value="P:cell division"/>
    <property type="evidence" value="ECO:0007669"/>
    <property type="project" value="UniProtKB-KW"/>
</dbReference>
<dbReference type="GO" id="GO:0007059">
    <property type="term" value="P:chromosome segregation"/>
    <property type="evidence" value="ECO:0007669"/>
    <property type="project" value="UniProtKB-UniRule"/>
</dbReference>
<dbReference type="GO" id="GO:0006313">
    <property type="term" value="P:DNA transposition"/>
    <property type="evidence" value="ECO:0007669"/>
    <property type="project" value="UniProtKB-UniRule"/>
</dbReference>
<dbReference type="CDD" id="cd00798">
    <property type="entry name" value="INT_XerDC_C"/>
    <property type="match status" value="1"/>
</dbReference>
<dbReference type="Gene3D" id="1.10.150.130">
    <property type="match status" value="1"/>
</dbReference>
<dbReference type="Gene3D" id="1.10.443.10">
    <property type="entry name" value="Intergrase catalytic core"/>
    <property type="match status" value="1"/>
</dbReference>
<dbReference type="HAMAP" id="MF_01808">
    <property type="entry name" value="Recomb_XerC_XerD"/>
    <property type="match status" value="1"/>
</dbReference>
<dbReference type="InterPro" id="IPR044068">
    <property type="entry name" value="CB"/>
</dbReference>
<dbReference type="InterPro" id="IPR011010">
    <property type="entry name" value="DNA_brk_join_enz"/>
</dbReference>
<dbReference type="InterPro" id="IPR013762">
    <property type="entry name" value="Integrase-like_cat_sf"/>
</dbReference>
<dbReference type="InterPro" id="IPR002104">
    <property type="entry name" value="Integrase_catalytic"/>
</dbReference>
<dbReference type="InterPro" id="IPR010998">
    <property type="entry name" value="Integrase_recombinase_N"/>
</dbReference>
<dbReference type="InterPro" id="IPR004107">
    <property type="entry name" value="Integrase_SAM-like_N"/>
</dbReference>
<dbReference type="InterPro" id="IPR011931">
    <property type="entry name" value="Recomb_XerC"/>
</dbReference>
<dbReference type="InterPro" id="IPR023009">
    <property type="entry name" value="Tyrosine_recombinase_XerC/XerD"/>
</dbReference>
<dbReference type="InterPro" id="IPR050090">
    <property type="entry name" value="Tyrosine_recombinase_XerCD"/>
</dbReference>
<dbReference type="NCBIfam" id="NF001399">
    <property type="entry name" value="PRK00283.1"/>
    <property type="match status" value="1"/>
</dbReference>
<dbReference type="NCBIfam" id="TIGR02224">
    <property type="entry name" value="recomb_XerC"/>
    <property type="match status" value="1"/>
</dbReference>
<dbReference type="PANTHER" id="PTHR30349">
    <property type="entry name" value="PHAGE INTEGRASE-RELATED"/>
    <property type="match status" value="1"/>
</dbReference>
<dbReference type="PANTHER" id="PTHR30349:SF81">
    <property type="entry name" value="TYROSINE RECOMBINASE XERC"/>
    <property type="match status" value="1"/>
</dbReference>
<dbReference type="Pfam" id="PF02899">
    <property type="entry name" value="Phage_int_SAM_1"/>
    <property type="match status" value="1"/>
</dbReference>
<dbReference type="Pfam" id="PF00589">
    <property type="entry name" value="Phage_integrase"/>
    <property type="match status" value="1"/>
</dbReference>
<dbReference type="SUPFAM" id="SSF56349">
    <property type="entry name" value="DNA breaking-rejoining enzymes"/>
    <property type="match status" value="1"/>
</dbReference>
<dbReference type="SUPFAM" id="SSF47823">
    <property type="entry name" value="lambda integrase-like, N-terminal domain"/>
    <property type="match status" value="1"/>
</dbReference>
<dbReference type="PROSITE" id="PS51900">
    <property type="entry name" value="CB"/>
    <property type="match status" value="1"/>
</dbReference>
<dbReference type="PROSITE" id="PS51898">
    <property type="entry name" value="TYR_RECOMBINASE"/>
    <property type="match status" value="1"/>
</dbReference>
<name>XERC_PSEE4</name>
<comment type="function">
    <text evidence="1">Site-specific tyrosine recombinase, which acts by catalyzing the cutting and rejoining of the recombining DNA molecules. The XerC-XerD complex is essential to convert dimers of the bacterial chromosome into monomers to permit their segregation at cell division. It also contributes to the segregational stability of plasmids.</text>
</comment>
<comment type="subunit">
    <text evidence="1">Forms a cyclic heterotetrameric complex composed of two molecules of XerC and two molecules of XerD.</text>
</comment>
<comment type="subcellular location">
    <subcellularLocation>
        <location evidence="1">Cytoplasm</location>
    </subcellularLocation>
</comment>
<comment type="similarity">
    <text evidence="1">Belongs to the 'phage' integrase family. XerC subfamily.</text>
</comment>
<protein>
    <recommendedName>
        <fullName evidence="1">Tyrosine recombinase XerC</fullName>
    </recommendedName>
</protein>
<feature type="chain" id="PRO_1000070026" description="Tyrosine recombinase XerC">
    <location>
        <begin position="1"/>
        <end position="299"/>
    </location>
</feature>
<feature type="domain" description="Core-binding (CB)" evidence="3">
    <location>
        <begin position="1"/>
        <end position="85"/>
    </location>
</feature>
<feature type="domain" description="Tyr recombinase" evidence="2">
    <location>
        <begin position="106"/>
        <end position="285"/>
    </location>
</feature>
<feature type="active site" evidence="1">
    <location>
        <position position="146"/>
    </location>
</feature>
<feature type="active site" evidence="1">
    <location>
        <position position="170"/>
    </location>
</feature>
<feature type="active site" evidence="1">
    <location>
        <position position="237"/>
    </location>
</feature>
<feature type="active site" evidence="1">
    <location>
        <position position="240"/>
    </location>
</feature>
<feature type="active site" evidence="1">
    <location>
        <position position="263"/>
    </location>
</feature>
<feature type="active site" description="O-(3'-phospho-DNA)-tyrosine intermediate" evidence="1">
    <location>
        <position position="272"/>
    </location>
</feature>
<proteinExistence type="inferred from homology"/>